<reference key="1">
    <citation type="journal article" date="2008" name="Proc. Natl. Acad. Sci. U.S.A.">
        <title>Nitrogen fixation island and rhizosphere competence traits in the genome of root-associated Pseudomonas stutzeri A1501.</title>
        <authorList>
            <person name="Yan Y."/>
            <person name="Yang J."/>
            <person name="Dou Y."/>
            <person name="Chen M."/>
            <person name="Ping S."/>
            <person name="Peng J."/>
            <person name="Lu W."/>
            <person name="Zhang W."/>
            <person name="Yao Z."/>
            <person name="Li H."/>
            <person name="Liu W."/>
            <person name="He S."/>
            <person name="Geng L."/>
            <person name="Zhang X."/>
            <person name="Yang F."/>
            <person name="Yu H."/>
            <person name="Zhan Y."/>
            <person name="Li D."/>
            <person name="Lin Z."/>
            <person name="Wang Y."/>
            <person name="Elmerich C."/>
            <person name="Lin M."/>
            <person name="Jin Q."/>
        </authorList>
    </citation>
    <scope>NUCLEOTIDE SEQUENCE [LARGE SCALE GENOMIC DNA]</scope>
    <source>
        <strain>A1501</strain>
    </source>
</reference>
<sequence length="392" mass="41706">MTFDLASRLAARRAEHLYRRRPLLQSPQGPEVTVDGERLLAFSSNDYLGLANHPEVIAALQQGAATWGVGGGASHLVIGHSTPHHRLEEALAEFTGRPRALLFSTGYMANLAAVTALVGQGDTVLEDRLNHASLLDAGLLSGARFSRYLHNDASSLAKRLEKASGNTLVVTDGVFSMDGDLADLPALCAEAKRHGAWVMVDDAHGFGPLGATGGGIAEHFGLGIDEVPVLVGTLGKAFGTAGAFVAGSEELIETLIQFARPYIYTTSQPPAVACATLKSLELLRSEGWRREHLNRLVARFREGAARIGLTLMASPTPIQPVLVGSSERALRLSALLRERGILVGAIRPPTVPAGSARLRITLTAAHTDAQLERLLEALAECWALMPEECDDA</sequence>
<feature type="chain" id="PRO_0000381085" description="8-amino-7-oxononanoate synthase">
    <location>
        <begin position="1"/>
        <end position="392"/>
    </location>
</feature>
<feature type="binding site" evidence="1">
    <location>
        <position position="19"/>
    </location>
    <ligand>
        <name>substrate</name>
    </ligand>
</feature>
<feature type="binding site" evidence="1">
    <location>
        <begin position="106"/>
        <end position="107"/>
    </location>
    <ligand>
        <name>pyridoxal 5'-phosphate</name>
        <dbReference type="ChEBI" id="CHEBI:597326"/>
    </ligand>
</feature>
<feature type="binding site" evidence="1">
    <location>
        <position position="131"/>
    </location>
    <ligand>
        <name>substrate</name>
    </ligand>
</feature>
<feature type="binding site" evidence="1">
    <location>
        <position position="176"/>
    </location>
    <ligand>
        <name>pyridoxal 5'-phosphate</name>
        <dbReference type="ChEBI" id="CHEBI:597326"/>
    </ligand>
</feature>
<feature type="binding site" evidence="1">
    <location>
        <position position="204"/>
    </location>
    <ligand>
        <name>pyridoxal 5'-phosphate</name>
        <dbReference type="ChEBI" id="CHEBI:597326"/>
    </ligand>
</feature>
<feature type="binding site" evidence="1">
    <location>
        <position position="233"/>
    </location>
    <ligand>
        <name>pyridoxal 5'-phosphate</name>
        <dbReference type="ChEBI" id="CHEBI:597326"/>
    </ligand>
</feature>
<feature type="binding site" evidence="1">
    <location>
        <position position="350"/>
    </location>
    <ligand>
        <name>substrate</name>
    </ligand>
</feature>
<feature type="modified residue" description="N6-(pyridoxal phosphate)lysine" evidence="1">
    <location>
        <position position="236"/>
    </location>
</feature>
<accession>A4VR87</accession>
<gene>
    <name evidence="1" type="primary">bioF</name>
    <name type="ordered locus">PST_3865</name>
</gene>
<proteinExistence type="inferred from homology"/>
<evidence type="ECO:0000255" key="1">
    <source>
        <dbReference type="HAMAP-Rule" id="MF_01693"/>
    </source>
</evidence>
<dbReference type="EC" id="2.3.1.47" evidence="1"/>
<dbReference type="EMBL" id="CP000304">
    <property type="protein sequence ID" value="ABP81488.1"/>
    <property type="molecule type" value="Genomic_DNA"/>
</dbReference>
<dbReference type="RefSeq" id="WP_011914873.1">
    <property type="nucleotide sequence ID" value="NC_009434.1"/>
</dbReference>
<dbReference type="SMR" id="A4VR87"/>
<dbReference type="KEGG" id="psa:PST_3865"/>
<dbReference type="eggNOG" id="COG0156">
    <property type="taxonomic scope" value="Bacteria"/>
</dbReference>
<dbReference type="HOGENOM" id="CLU_015846_11_2_6"/>
<dbReference type="UniPathway" id="UPA00078"/>
<dbReference type="Proteomes" id="UP000000233">
    <property type="component" value="Chromosome"/>
</dbReference>
<dbReference type="GO" id="GO:0008710">
    <property type="term" value="F:8-amino-7-oxononanoate synthase activity"/>
    <property type="evidence" value="ECO:0007669"/>
    <property type="project" value="UniProtKB-UniRule"/>
</dbReference>
<dbReference type="GO" id="GO:0030170">
    <property type="term" value="F:pyridoxal phosphate binding"/>
    <property type="evidence" value="ECO:0007669"/>
    <property type="project" value="UniProtKB-UniRule"/>
</dbReference>
<dbReference type="GO" id="GO:0009102">
    <property type="term" value="P:biotin biosynthetic process"/>
    <property type="evidence" value="ECO:0007669"/>
    <property type="project" value="UniProtKB-UniRule"/>
</dbReference>
<dbReference type="CDD" id="cd06454">
    <property type="entry name" value="KBL_like"/>
    <property type="match status" value="1"/>
</dbReference>
<dbReference type="Gene3D" id="3.90.1150.10">
    <property type="entry name" value="Aspartate Aminotransferase, domain 1"/>
    <property type="match status" value="1"/>
</dbReference>
<dbReference type="Gene3D" id="3.40.640.10">
    <property type="entry name" value="Type I PLP-dependent aspartate aminotransferase-like (Major domain)"/>
    <property type="match status" value="1"/>
</dbReference>
<dbReference type="HAMAP" id="MF_01693">
    <property type="entry name" value="BioF_aminotrans_2"/>
    <property type="match status" value="1"/>
</dbReference>
<dbReference type="InterPro" id="IPR001917">
    <property type="entry name" value="Aminotrans_II_pyridoxalP_BS"/>
</dbReference>
<dbReference type="InterPro" id="IPR004839">
    <property type="entry name" value="Aminotransferase_I/II_large"/>
</dbReference>
<dbReference type="InterPro" id="IPR050087">
    <property type="entry name" value="AON_synthase_class-II"/>
</dbReference>
<dbReference type="InterPro" id="IPR004723">
    <property type="entry name" value="AONS_Archaea/Proteobacteria"/>
</dbReference>
<dbReference type="InterPro" id="IPR022834">
    <property type="entry name" value="AONS_Proteobacteria"/>
</dbReference>
<dbReference type="InterPro" id="IPR015424">
    <property type="entry name" value="PyrdxlP-dep_Trfase"/>
</dbReference>
<dbReference type="InterPro" id="IPR015421">
    <property type="entry name" value="PyrdxlP-dep_Trfase_major"/>
</dbReference>
<dbReference type="InterPro" id="IPR015422">
    <property type="entry name" value="PyrdxlP-dep_Trfase_small"/>
</dbReference>
<dbReference type="NCBIfam" id="TIGR00858">
    <property type="entry name" value="bioF"/>
    <property type="match status" value="1"/>
</dbReference>
<dbReference type="PANTHER" id="PTHR13693:SF100">
    <property type="entry name" value="8-AMINO-7-OXONONANOATE SYNTHASE"/>
    <property type="match status" value="1"/>
</dbReference>
<dbReference type="PANTHER" id="PTHR13693">
    <property type="entry name" value="CLASS II AMINOTRANSFERASE/8-AMINO-7-OXONONANOATE SYNTHASE"/>
    <property type="match status" value="1"/>
</dbReference>
<dbReference type="Pfam" id="PF00155">
    <property type="entry name" value="Aminotran_1_2"/>
    <property type="match status" value="1"/>
</dbReference>
<dbReference type="SUPFAM" id="SSF53383">
    <property type="entry name" value="PLP-dependent transferases"/>
    <property type="match status" value="1"/>
</dbReference>
<dbReference type="PROSITE" id="PS00599">
    <property type="entry name" value="AA_TRANSFER_CLASS_2"/>
    <property type="match status" value="1"/>
</dbReference>
<protein>
    <recommendedName>
        <fullName evidence="1">8-amino-7-oxononanoate synthase</fullName>
        <shortName evidence="1">AONS</shortName>
        <ecNumber evidence="1">2.3.1.47</ecNumber>
    </recommendedName>
    <alternativeName>
        <fullName evidence="1">7-keto-8-amino-pelargonic acid synthase</fullName>
        <shortName evidence="1">7-KAP synthase</shortName>
        <shortName evidence="1">KAPA synthase</shortName>
    </alternativeName>
    <alternativeName>
        <fullName evidence="1">8-amino-7-ketopelargonate synthase</fullName>
    </alternativeName>
</protein>
<organism>
    <name type="scientific">Stutzerimonas stutzeri (strain A1501)</name>
    <name type="common">Pseudomonas stutzeri</name>
    <dbReference type="NCBI Taxonomy" id="379731"/>
    <lineage>
        <taxon>Bacteria</taxon>
        <taxon>Pseudomonadati</taxon>
        <taxon>Pseudomonadota</taxon>
        <taxon>Gammaproteobacteria</taxon>
        <taxon>Pseudomonadales</taxon>
        <taxon>Pseudomonadaceae</taxon>
        <taxon>Stutzerimonas</taxon>
    </lineage>
</organism>
<name>BIOF_STUS1</name>
<keyword id="KW-0093">Biotin biosynthesis</keyword>
<keyword id="KW-0663">Pyridoxal phosphate</keyword>
<keyword id="KW-1185">Reference proteome</keyword>
<keyword id="KW-0808">Transferase</keyword>
<comment type="function">
    <text evidence="1">Catalyzes the decarboxylative condensation of pimeloyl-[acyl-carrier protein] and L-alanine to produce 8-amino-7-oxononanoate (AON), [acyl-carrier protein], and carbon dioxide.</text>
</comment>
<comment type="catalytic activity">
    <reaction evidence="1">
        <text>6-carboxyhexanoyl-[ACP] + L-alanine + H(+) = (8S)-8-amino-7-oxononanoate + holo-[ACP] + CO2</text>
        <dbReference type="Rhea" id="RHEA:42288"/>
        <dbReference type="Rhea" id="RHEA-COMP:9685"/>
        <dbReference type="Rhea" id="RHEA-COMP:9955"/>
        <dbReference type="ChEBI" id="CHEBI:15378"/>
        <dbReference type="ChEBI" id="CHEBI:16526"/>
        <dbReference type="ChEBI" id="CHEBI:57972"/>
        <dbReference type="ChEBI" id="CHEBI:64479"/>
        <dbReference type="ChEBI" id="CHEBI:78846"/>
        <dbReference type="ChEBI" id="CHEBI:149468"/>
        <dbReference type="EC" id="2.3.1.47"/>
    </reaction>
</comment>
<comment type="cofactor">
    <cofactor evidence="1">
        <name>pyridoxal 5'-phosphate</name>
        <dbReference type="ChEBI" id="CHEBI:597326"/>
    </cofactor>
</comment>
<comment type="pathway">
    <text evidence="1">Cofactor biosynthesis; biotin biosynthesis.</text>
</comment>
<comment type="subunit">
    <text evidence="1">Homodimer.</text>
</comment>
<comment type="similarity">
    <text evidence="1">Belongs to the class-II pyridoxal-phosphate-dependent aminotransferase family. BioF subfamily.</text>
</comment>